<proteinExistence type="evidence at protein level"/>
<reference evidence="7" key="1">
    <citation type="journal article" date="2002" name="Nature">
        <title>The genome sequence of Schizosaccharomyces pombe.</title>
        <authorList>
            <person name="Wood V."/>
            <person name="Gwilliam R."/>
            <person name="Rajandream M.A."/>
            <person name="Lyne M.H."/>
            <person name="Lyne R."/>
            <person name="Stewart A."/>
            <person name="Sgouros J.G."/>
            <person name="Peat N."/>
            <person name="Hayles J."/>
            <person name="Baker S.G."/>
            <person name="Basham D."/>
            <person name="Bowman S."/>
            <person name="Brooks K."/>
            <person name="Brown D."/>
            <person name="Brown S."/>
            <person name="Chillingworth T."/>
            <person name="Churcher C.M."/>
            <person name="Collins M."/>
            <person name="Connor R."/>
            <person name="Cronin A."/>
            <person name="Davis P."/>
            <person name="Feltwell T."/>
            <person name="Fraser A."/>
            <person name="Gentles S."/>
            <person name="Goble A."/>
            <person name="Hamlin N."/>
            <person name="Harris D.E."/>
            <person name="Hidalgo J."/>
            <person name="Hodgson G."/>
            <person name="Holroyd S."/>
            <person name="Hornsby T."/>
            <person name="Howarth S."/>
            <person name="Huckle E.J."/>
            <person name="Hunt S."/>
            <person name="Jagels K."/>
            <person name="James K.D."/>
            <person name="Jones L."/>
            <person name="Jones M."/>
            <person name="Leather S."/>
            <person name="McDonald S."/>
            <person name="McLean J."/>
            <person name="Mooney P."/>
            <person name="Moule S."/>
            <person name="Mungall K.L."/>
            <person name="Murphy L.D."/>
            <person name="Niblett D."/>
            <person name="Odell C."/>
            <person name="Oliver K."/>
            <person name="O'Neil S."/>
            <person name="Pearson D."/>
            <person name="Quail M.A."/>
            <person name="Rabbinowitsch E."/>
            <person name="Rutherford K.M."/>
            <person name="Rutter S."/>
            <person name="Saunders D."/>
            <person name="Seeger K."/>
            <person name="Sharp S."/>
            <person name="Skelton J."/>
            <person name="Simmonds M.N."/>
            <person name="Squares R."/>
            <person name="Squares S."/>
            <person name="Stevens K."/>
            <person name="Taylor K."/>
            <person name="Taylor R.G."/>
            <person name="Tivey A."/>
            <person name="Walsh S.V."/>
            <person name="Warren T."/>
            <person name="Whitehead S."/>
            <person name="Woodward J.R."/>
            <person name="Volckaert G."/>
            <person name="Aert R."/>
            <person name="Robben J."/>
            <person name="Grymonprez B."/>
            <person name="Weltjens I."/>
            <person name="Vanstreels E."/>
            <person name="Rieger M."/>
            <person name="Schaefer M."/>
            <person name="Mueller-Auer S."/>
            <person name="Gabel C."/>
            <person name="Fuchs M."/>
            <person name="Duesterhoeft A."/>
            <person name="Fritzc C."/>
            <person name="Holzer E."/>
            <person name="Moestl D."/>
            <person name="Hilbert H."/>
            <person name="Borzym K."/>
            <person name="Langer I."/>
            <person name="Beck A."/>
            <person name="Lehrach H."/>
            <person name="Reinhardt R."/>
            <person name="Pohl T.M."/>
            <person name="Eger P."/>
            <person name="Zimmermann W."/>
            <person name="Wedler H."/>
            <person name="Wambutt R."/>
            <person name="Purnelle B."/>
            <person name="Goffeau A."/>
            <person name="Cadieu E."/>
            <person name="Dreano S."/>
            <person name="Gloux S."/>
            <person name="Lelaure V."/>
            <person name="Mottier S."/>
            <person name="Galibert F."/>
            <person name="Aves S.J."/>
            <person name="Xiang Z."/>
            <person name="Hunt C."/>
            <person name="Moore K."/>
            <person name="Hurst S.M."/>
            <person name="Lucas M."/>
            <person name="Rochet M."/>
            <person name="Gaillardin C."/>
            <person name="Tallada V.A."/>
            <person name="Garzon A."/>
            <person name="Thode G."/>
            <person name="Daga R.R."/>
            <person name="Cruzado L."/>
            <person name="Jimenez J."/>
            <person name="Sanchez M."/>
            <person name="del Rey F."/>
            <person name="Benito J."/>
            <person name="Dominguez A."/>
            <person name="Revuelta J.L."/>
            <person name="Moreno S."/>
            <person name="Armstrong J."/>
            <person name="Forsburg S.L."/>
            <person name="Cerutti L."/>
            <person name="Lowe T."/>
            <person name="McCombie W.R."/>
            <person name="Paulsen I."/>
            <person name="Potashkin J."/>
            <person name="Shpakovski G.V."/>
            <person name="Ussery D."/>
            <person name="Barrell B.G."/>
            <person name="Nurse P."/>
        </authorList>
    </citation>
    <scope>NUCLEOTIDE SEQUENCE [LARGE SCALE GENOMIC DNA]</scope>
    <source>
        <strain>972 / ATCC 24843</strain>
    </source>
</reference>
<reference evidence="6" key="2">
    <citation type="journal article" date="2006" name="Nat. Biotechnol.">
        <title>ORFeome cloning and global analysis of protein localization in the fission yeast Schizosaccharomyces pombe.</title>
        <authorList>
            <person name="Matsuyama A."/>
            <person name="Arai R."/>
            <person name="Yashiroda Y."/>
            <person name="Shirai A."/>
            <person name="Kamata A."/>
            <person name="Sekido S."/>
            <person name="Kobayashi Y."/>
            <person name="Hashimoto A."/>
            <person name="Hamamoto M."/>
            <person name="Hiraoka Y."/>
            <person name="Horinouchi S."/>
            <person name="Yoshida M."/>
        </authorList>
    </citation>
    <scope>SUBCELLULAR LOCATION [LARGE SCALE ANALYSIS]</scope>
</reference>
<reference key="3">
    <citation type="journal article" date="2007" name="J. Biol. Chem.">
        <title>Wobble inosine tRNA modification is essential to cell cycle progression in G(1)/S and G(2)/M transitions in fission yeast.</title>
        <authorList>
            <person name="Tsutsumi S."/>
            <person name="Sugiura R."/>
            <person name="Ma Y."/>
            <person name="Tokuoka H."/>
            <person name="Ohta K."/>
            <person name="Ohte R."/>
            <person name="Noma A."/>
            <person name="Suzuki T."/>
            <person name="Kuno T."/>
        </authorList>
    </citation>
    <scope>FUNCTION</scope>
    <scope>MUTAGENESIS OF SER-257</scope>
</reference>
<evidence type="ECO:0000250" key="1">
    <source>
        <dbReference type="UniProtKB" id="Q9URQ3"/>
    </source>
</evidence>
<evidence type="ECO:0000255" key="2"/>
<evidence type="ECO:0000255" key="3">
    <source>
        <dbReference type="PROSITE-ProRule" id="PRU01083"/>
    </source>
</evidence>
<evidence type="ECO:0000269" key="4">
    <source>
    </source>
</evidence>
<evidence type="ECO:0000269" key="5">
    <source>
    </source>
</evidence>
<evidence type="ECO:0000305" key="6"/>
<evidence type="ECO:0000312" key="7">
    <source>
        <dbReference type="EMBL" id="CAB76025.1"/>
    </source>
</evidence>
<evidence type="ECO:0000312" key="8">
    <source>
        <dbReference type="PomBase" id="SPAP27G11.04c"/>
    </source>
</evidence>
<accession>Q9P7N4</accession>
<feature type="chain" id="PRO_0000310824" description="tRNA-specific adenosine deaminase subunit tad3">
    <location>
        <begin position="1"/>
        <end position="315"/>
    </location>
</feature>
<feature type="domain" description="CMP/dCMP-type deaminase" evidence="3">
    <location>
        <begin position="158"/>
        <end position="299"/>
    </location>
</feature>
<feature type="binding site" evidence="1">
    <location>
        <position position="211"/>
    </location>
    <ligand>
        <name>Zn(2+)</name>
        <dbReference type="ChEBI" id="CHEBI:29105"/>
    </ligand>
</feature>
<feature type="binding site" evidence="1">
    <location>
        <position position="253"/>
    </location>
    <ligand>
        <name>Zn(2+)</name>
        <dbReference type="ChEBI" id="CHEBI:29105"/>
    </ligand>
</feature>
<feature type="binding site" evidence="1">
    <location>
        <position position="256"/>
    </location>
    <ligand>
        <name>Zn(2+)</name>
        <dbReference type="ChEBI" id="CHEBI:29105"/>
    </ligand>
</feature>
<feature type="mutagenesis site" description="In tad3-1; affects its association with catalytically active Tad2, leading to an impairment of enzymatic function." evidence="5">
    <original>S</original>
    <variation>N</variation>
    <location>
        <position position="257"/>
    </location>
</feature>
<organism>
    <name type="scientific">Schizosaccharomyces pombe (strain 972 / ATCC 24843)</name>
    <name type="common">Fission yeast</name>
    <dbReference type="NCBI Taxonomy" id="284812"/>
    <lineage>
        <taxon>Eukaryota</taxon>
        <taxon>Fungi</taxon>
        <taxon>Dikarya</taxon>
        <taxon>Ascomycota</taxon>
        <taxon>Taphrinomycotina</taxon>
        <taxon>Schizosaccharomycetes</taxon>
        <taxon>Schizosaccharomycetales</taxon>
        <taxon>Schizosaccharomycetaceae</taxon>
        <taxon>Schizosaccharomyces</taxon>
    </lineage>
</organism>
<gene>
    <name type="primary">tad3</name>
    <name evidence="8" type="ORF">SPAP27G11.04c</name>
</gene>
<dbReference type="EMBL" id="CU329670">
    <property type="protein sequence ID" value="CAB76025.1"/>
    <property type="molecule type" value="Genomic_DNA"/>
</dbReference>
<dbReference type="RefSeq" id="NP_593408.1">
    <property type="nucleotide sequence ID" value="NM_001018841.2"/>
</dbReference>
<dbReference type="SMR" id="Q9P7N4"/>
<dbReference type="BioGRID" id="278471">
    <property type="interactions" value="2"/>
</dbReference>
<dbReference type="FunCoup" id="Q9P7N4">
    <property type="interactions" value="449"/>
</dbReference>
<dbReference type="IntAct" id="Q9P7N4">
    <property type="interactions" value="1"/>
</dbReference>
<dbReference type="STRING" id="284812.Q9P7N4"/>
<dbReference type="iPTMnet" id="Q9P7N4"/>
<dbReference type="PaxDb" id="4896-SPAP27G11.04c.1"/>
<dbReference type="EnsemblFungi" id="SPAP27G11.04c.1">
    <property type="protein sequence ID" value="SPAP27G11.04c.1:pep"/>
    <property type="gene ID" value="SPAP27G11.04c"/>
</dbReference>
<dbReference type="GeneID" id="2541987"/>
<dbReference type="KEGG" id="spo:2541987"/>
<dbReference type="PomBase" id="SPAP27G11.04c">
    <property type="gene designation" value="tad3"/>
</dbReference>
<dbReference type="VEuPathDB" id="FungiDB:SPAP27G11.04c"/>
<dbReference type="eggNOG" id="KOG2771">
    <property type="taxonomic scope" value="Eukaryota"/>
</dbReference>
<dbReference type="HOGENOM" id="CLU_013817_2_0_1"/>
<dbReference type="InParanoid" id="Q9P7N4"/>
<dbReference type="OMA" id="QHWPTSF"/>
<dbReference type="PhylomeDB" id="Q9P7N4"/>
<dbReference type="PRO" id="PR:Q9P7N4"/>
<dbReference type="Proteomes" id="UP000002485">
    <property type="component" value="Chromosome I"/>
</dbReference>
<dbReference type="GO" id="GO:0005737">
    <property type="term" value="C:cytoplasm"/>
    <property type="evidence" value="ECO:0000318"/>
    <property type="project" value="GO_Central"/>
</dbReference>
<dbReference type="GO" id="GO:0005829">
    <property type="term" value="C:cytosol"/>
    <property type="evidence" value="ECO:0007005"/>
    <property type="project" value="PomBase"/>
</dbReference>
<dbReference type="GO" id="GO:0005634">
    <property type="term" value="C:nucleus"/>
    <property type="evidence" value="ECO:0007005"/>
    <property type="project" value="PomBase"/>
</dbReference>
<dbReference type="GO" id="GO:0052718">
    <property type="term" value="C:tRNA-specific adenosine-34 deaminase complex"/>
    <property type="evidence" value="ECO:0000314"/>
    <property type="project" value="PomBase"/>
</dbReference>
<dbReference type="GO" id="GO:0003824">
    <property type="term" value="F:catalytic activity"/>
    <property type="evidence" value="ECO:0007669"/>
    <property type="project" value="InterPro"/>
</dbReference>
<dbReference type="GO" id="GO:0030234">
    <property type="term" value="F:enzyme regulator activity"/>
    <property type="evidence" value="ECO:0000314"/>
    <property type="project" value="PomBase"/>
</dbReference>
<dbReference type="GO" id="GO:0002100">
    <property type="term" value="P:tRNA wobble adenosine to inosine editing"/>
    <property type="evidence" value="ECO:0000314"/>
    <property type="project" value="PomBase"/>
</dbReference>
<dbReference type="CDD" id="cd01285">
    <property type="entry name" value="nucleoside_deaminase"/>
    <property type="match status" value="1"/>
</dbReference>
<dbReference type="Gene3D" id="3.40.140.10">
    <property type="entry name" value="Cytidine Deaminase, domain 2"/>
    <property type="match status" value="1"/>
</dbReference>
<dbReference type="InterPro" id="IPR002125">
    <property type="entry name" value="CMP_dCMP_dom"/>
</dbReference>
<dbReference type="InterPro" id="IPR016193">
    <property type="entry name" value="Cytidine_deaminase-like"/>
</dbReference>
<dbReference type="PANTHER" id="PTHR11079">
    <property type="entry name" value="CYTOSINE DEAMINASE FAMILY MEMBER"/>
    <property type="match status" value="1"/>
</dbReference>
<dbReference type="PANTHER" id="PTHR11079:SF156">
    <property type="entry name" value="INACTIVE TRNA-SPECIFIC ADENOSINE DEAMINASE-LIKE PROTEIN 3-RELATED"/>
    <property type="match status" value="1"/>
</dbReference>
<dbReference type="Pfam" id="PF00383">
    <property type="entry name" value="dCMP_cyt_deam_1"/>
    <property type="match status" value="1"/>
</dbReference>
<dbReference type="SUPFAM" id="SSF53927">
    <property type="entry name" value="Cytidine deaminase-like"/>
    <property type="match status" value="1"/>
</dbReference>
<dbReference type="PROSITE" id="PS51747">
    <property type="entry name" value="CYT_DCMP_DEAMINASES_2"/>
    <property type="match status" value="1"/>
</dbReference>
<comment type="function">
    <text evidence="5">Structural subunit of tRNA-specific adenosine deaminase, which deaminates adenosine-34 (the first, also called wobble position of the anticodon) to inosine in many tRNAs. Inosine-34 allows the decoding of 3 different nucleotides at the third position of mRNA codons, as inosine is able to pair with U, C, and A. The wobble inosine tRNA modification is essential for cell cycle progression in the G1/S and G2/M transitions in fission yeast.</text>
</comment>
<comment type="subunit">
    <text evidence="1">Heterodimer with Tad2.</text>
</comment>
<comment type="subcellular location">
    <subcellularLocation>
        <location evidence="4">Cytoplasm</location>
    </subcellularLocation>
    <subcellularLocation>
        <location evidence="4">Nucleus</location>
    </subcellularLocation>
</comment>
<comment type="similarity">
    <text evidence="2">Belongs to the cytidine and deoxycytidylate deaminase family. ADAT3 subfamily.</text>
</comment>
<comment type="caution">
    <text evidence="1 6">In contrast to other cytidine and deoxycytidylate deaminase, lacks the conserved Glu active site in position 213 which is replaced by a Val residue, suggesting that it acts as a regulatory subunit.</text>
</comment>
<sequence length="315" mass="36276">MVKTNISKNSPKEATVPELDWPFKLIKSHLETRKLETENVWIACFEPKYASKVTQYVKQIRSKQKESLLHCNRLRRIQDENGSLELQIIICPEKSMTANEIGKDFEDLGIVSKMIFLYAVPAFPPLTDEQFHEWNSVWPVSYRKHVQRQDVFTVHELKRIESILEDLINAAGASHKHGEIGCAAAIYDPTTDTVLAVSVDERSKLKNPINHCVMNAINLVAKRELSRRQNRTDGSKDRYLCKDLTVVMTHEPCVMCSMGLLHSRIRRLIYCKKQPLTGGIESLYGIHWRAELNHRYLAYSGWNKPVPSIKENIHV</sequence>
<protein>
    <recommendedName>
        <fullName>tRNA-specific adenosine deaminase subunit tad3</fullName>
    </recommendedName>
    <alternativeName>
        <fullName>tRNA-specific adenosine-34 deaminase subunit tad3</fullName>
    </alternativeName>
</protein>
<name>TAD3_SCHPO</name>
<keyword id="KW-0963">Cytoplasm</keyword>
<keyword id="KW-0479">Metal-binding</keyword>
<keyword id="KW-0539">Nucleus</keyword>
<keyword id="KW-1185">Reference proteome</keyword>
<keyword id="KW-0819">tRNA processing</keyword>
<keyword id="KW-0862">Zinc</keyword>